<gene>
    <name evidence="1" type="primary">hisC</name>
    <name type="ordered locus">ECED1_2370</name>
</gene>
<dbReference type="EC" id="2.6.1.9" evidence="1"/>
<dbReference type="EMBL" id="CU928162">
    <property type="protein sequence ID" value="CAR08556.2"/>
    <property type="molecule type" value="Genomic_DNA"/>
</dbReference>
<dbReference type="RefSeq" id="WP_000109001.1">
    <property type="nucleotide sequence ID" value="NC_011745.1"/>
</dbReference>
<dbReference type="SMR" id="B7MWU0"/>
<dbReference type="KEGG" id="ecq:ECED1_2370"/>
<dbReference type="HOGENOM" id="CLU_017584_3_1_6"/>
<dbReference type="UniPathway" id="UPA00031">
    <property type="reaction ID" value="UER00012"/>
</dbReference>
<dbReference type="Proteomes" id="UP000000748">
    <property type="component" value="Chromosome"/>
</dbReference>
<dbReference type="GO" id="GO:0004400">
    <property type="term" value="F:histidinol-phosphate transaminase activity"/>
    <property type="evidence" value="ECO:0007669"/>
    <property type="project" value="UniProtKB-UniRule"/>
</dbReference>
<dbReference type="GO" id="GO:0030170">
    <property type="term" value="F:pyridoxal phosphate binding"/>
    <property type="evidence" value="ECO:0007669"/>
    <property type="project" value="InterPro"/>
</dbReference>
<dbReference type="GO" id="GO:0000105">
    <property type="term" value="P:L-histidine biosynthetic process"/>
    <property type="evidence" value="ECO:0007669"/>
    <property type="project" value="UniProtKB-UniRule"/>
</dbReference>
<dbReference type="CDD" id="cd00609">
    <property type="entry name" value="AAT_like"/>
    <property type="match status" value="1"/>
</dbReference>
<dbReference type="FunFam" id="3.40.640.10:FF:000032">
    <property type="entry name" value="Histidinol-phosphate aminotransferase"/>
    <property type="match status" value="1"/>
</dbReference>
<dbReference type="FunFam" id="3.90.1150.10:FF:000042">
    <property type="entry name" value="Histidinol-phosphate aminotransferase"/>
    <property type="match status" value="1"/>
</dbReference>
<dbReference type="Gene3D" id="3.90.1150.10">
    <property type="entry name" value="Aspartate Aminotransferase, domain 1"/>
    <property type="match status" value="1"/>
</dbReference>
<dbReference type="Gene3D" id="3.40.640.10">
    <property type="entry name" value="Type I PLP-dependent aspartate aminotransferase-like (Major domain)"/>
    <property type="match status" value="1"/>
</dbReference>
<dbReference type="HAMAP" id="MF_01023">
    <property type="entry name" value="HisC_aminotrans_2"/>
    <property type="match status" value="1"/>
</dbReference>
<dbReference type="InterPro" id="IPR001917">
    <property type="entry name" value="Aminotrans_II_pyridoxalP_BS"/>
</dbReference>
<dbReference type="InterPro" id="IPR004839">
    <property type="entry name" value="Aminotransferase_I/II_large"/>
</dbReference>
<dbReference type="InterPro" id="IPR005861">
    <property type="entry name" value="HisP_aminotrans"/>
</dbReference>
<dbReference type="InterPro" id="IPR015424">
    <property type="entry name" value="PyrdxlP-dep_Trfase"/>
</dbReference>
<dbReference type="InterPro" id="IPR015421">
    <property type="entry name" value="PyrdxlP-dep_Trfase_major"/>
</dbReference>
<dbReference type="InterPro" id="IPR015422">
    <property type="entry name" value="PyrdxlP-dep_Trfase_small"/>
</dbReference>
<dbReference type="NCBIfam" id="TIGR01141">
    <property type="entry name" value="hisC"/>
    <property type="match status" value="1"/>
</dbReference>
<dbReference type="PANTHER" id="PTHR42885:SF2">
    <property type="entry name" value="HISTIDINOL-PHOSPHATE AMINOTRANSFERASE"/>
    <property type="match status" value="1"/>
</dbReference>
<dbReference type="PANTHER" id="PTHR42885">
    <property type="entry name" value="HISTIDINOL-PHOSPHATE AMINOTRANSFERASE-RELATED"/>
    <property type="match status" value="1"/>
</dbReference>
<dbReference type="Pfam" id="PF00155">
    <property type="entry name" value="Aminotran_1_2"/>
    <property type="match status" value="1"/>
</dbReference>
<dbReference type="SUPFAM" id="SSF53383">
    <property type="entry name" value="PLP-dependent transferases"/>
    <property type="match status" value="1"/>
</dbReference>
<dbReference type="PROSITE" id="PS00599">
    <property type="entry name" value="AA_TRANSFER_CLASS_2"/>
    <property type="match status" value="1"/>
</dbReference>
<sequence length="356" mass="39422">MSTVTITDLARENVRNLTPYQSARRLGGNGDVWLNANEYPTVVEFQLTQQTLNRYPECQPKAVIENYAQYAGVKPEQVLVSRGADEGIELLIRAFCEPGKDAILYCPPTYGMYSVSAETIGVECRTVPTLENWQLDLQGISDKLDGVKVVYVCSPNNPTGQLINPQDFRTLLELTRGKAIVVADEAYIEFCPQASLAGWLAEYPHLAILRTLSKAFALAGLRCGFTLANEEVINLLMKVIAPYPLSTPVADIAAQALSPQGIVAMRERVTQIIAEREYLIAALKEISCVEQVFDSETNYILARFKASSAVFKSLWDQGIILRDQNKQPSLSGCLRITVGTREESQRVIDALRAEQV</sequence>
<accession>B7MWU0</accession>
<evidence type="ECO:0000255" key="1">
    <source>
        <dbReference type="HAMAP-Rule" id="MF_01023"/>
    </source>
</evidence>
<feature type="chain" id="PRO_1000149096" description="Histidinol-phosphate aminotransferase">
    <location>
        <begin position="1"/>
        <end position="356"/>
    </location>
</feature>
<feature type="modified residue" description="N6-(pyridoxal phosphate)lysine" evidence="1">
    <location>
        <position position="214"/>
    </location>
</feature>
<protein>
    <recommendedName>
        <fullName evidence="1">Histidinol-phosphate aminotransferase</fullName>
        <ecNumber evidence="1">2.6.1.9</ecNumber>
    </recommendedName>
    <alternativeName>
        <fullName evidence="1">Imidazole acetol-phosphate transaminase</fullName>
    </alternativeName>
</protein>
<proteinExistence type="inferred from homology"/>
<reference key="1">
    <citation type="journal article" date="2009" name="PLoS Genet.">
        <title>Organised genome dynamics in the Escherichia coli species results in highly diverse adaptive paths.</title>
        <authorList>
            <person name="Touchon M."/>
            <person name="Hoede C."/>
            <person name="Tenaillon O."/>
            <person name="Barbe V."/>
            <person name="Baeriswyl S."/>
            <person name="Bidet P."/>
            <person name="Bingen E."/>
            <person name="Bonacorsi S."/>
            <person name="Bouchier C."/>
            <person name="Bouvet O."/>
            <person name="Calteau A."/>
            <person name="Chiapello H."/>
            <person name="Clermont O."/>
            <person name="Cruveiller S."/>
            <person name="Danchin A."/>
            <person name="Diard M."/>
            <person name="Dossat C."/>
            <person name="Karoui M.E."/>
            <person name="Frapy E."/>
            <person name="Garry L."/>
            <person name="Ghigo J.M."/>
            <person name="Gilles A.M."/>
            <person name="Johnson J."/>
            <person name="Le Bouguenec C."/>
            <person name="Lescat M."/>
            <person name="Mangenot S."/>
            <person name="Martinez-Jehanne V."/>
            <person name="Matic I."/>
            <person name="Nassif X."/>
            <person name="Oztas S."/>
            <person name="Petit M.A."/>
            <person name="Pichon C."/>
            <person name="Rouy Z."/>
            <person name="Ruf C.S."/>
            <person name="Schneider D."/>
            <person name="Tourret J."/>
            <person name="Vacherie B."/>
            <person name="Vallenet D."/>
            <person name="Medigue C."/>
            <person name="Rocha E.P.C."/>
            <person name="Denamur E."/>
        </authorList>
    </citation>
    <scope>NUCLEOTIDE SEQUENCE [LARGE SCALE GENOMIC DNA]</scope>
    <source>
        <strain>ED1a</strain>
    </source>
</reference>
<comment type="catalytic activity">
    <reaction evidence="1">
        <text>L-histidinol phosphate + 2-oxoglutarate = 3-(imidazol-4-yl)-2-oxopropyl phosphate + L-glutamate</text>
        <dbReference type="Rhea" id="RHEA:23744"/>
        <dbReference type="ChEBI" id="CHEBI:16810"/>
        <dbReference type="ChEBI" id="CHEBI:29985"/>
        <dbReference type="ChEBI" id="CHEBI:57766"/>
        <dbReference type="ChEBI" id="CHEBI:57980"/>
        <dbReference type="EC" id="2.6.1.9"/>
    </reaction>
</comment>
<comment type="cofactor">
    <cofactor evidence="1">
        <name>pyridoxal 5'-phosphate</name>
        <dbReference type="ChEBI" id="CHEBI:597326"/>
    </cofactor>
</comment>
<comment type="pathway">
    <text evidence="1">Amino-acid biosynthesis; L-histidine biosynthesis; L-histidine from 5-phospho-alpha-D-ribose 1-diphosphate: step 7/9.</text>
</comment>
<comment type="subunit">
    <text evidence="1">Homodimer.</text>
</comment>
<comment type="similarity">
    <text evidence="1">Belongs to the class-II pyridoxal-phosphate-dependent aminotransferase family. Histidinol-phosphate aminotransferase subfamily.</text>
</comment>
<organism>
    <name type="scientific">Escherichia coli O81 (strain ED1a)</name>
    <dbReference type="NCBI Taxonomy" id="585397"/>
    <lineage>
        <taxon>Bacteria</taxon>
        <taxon>Pseudomonadati</taxon>
        <taxon>Pseudomonadota</taxon>
        <taxon>Gammaproteobacteria</taxon>
        <taxon>Enterobacterales</taxon>
        <taxon>Enterobacteriaceae</taxon>
        <taxon>Escherichia</taxon>
    </lineage>
</organism>
<name>HIS8_ECO81</name>
<keyword id="KW-0028">Amino-acid biosynthesis</keyword>
<keyword id="KW-0032">Aminotransferase</keyword>
<keyword id="KW-0368">Histidine biosynthesis</keyword>
<keyword id="KW-0663">Pyridoxal phosphate</keyword>
<keyword id="KW-0808">Transferase</keyword>